<comment type="function">
    <text evidence="1">Modulates RecA activity.</text>
</comment>
<comment type="subcellular location">
    <subcellularLocation>
        <location evidence="1">Cytoplasm</location>
    </subcellularLocation>
</comment>
<comment type="similarity">
    <text evidence="1">Belongs to the RecX family.</text>
</comment>
<organism>
    <name type="scientific">Leuconostoc citreum (strain KM20)</name>
    <dbReference type="NCBI Taxonomy" id="349519"/>
    <lineage>
        <taxon>Bacteria</taxon>
        <taxon>Bacillati</taxon>
        <taxon>Bacillota</taxon>
        <taxon>Bacilli</taxon>
        <taxon>Lactobacillales</taxon>
        <taxon>Lactobacillaceae</taxon>
        <taxon>Leuconostoc</taxon>
    </lineage>
</organism>
<protein>
    <recommendedName>
        <fullName evidence="1">Regulatory protein RecX</fullName>
    </recommendedName>
</protein>
<feature type="chain" id="PRO_1000137177" description="Regulatory protein RecX">
    <location>
        <begin position="1"/>
        <end position="266"/>
    </location>
</feature>
<keyword id="KW-0963">Cytoplasm</keyword>
<keyword id="KW-1185">Reference proteome</keyword>
<name>RECX_LEUCK</name>
<sequence length="266" mass="30304">MKTITKIAIQKRAGRYSIELDNQFAFGVAESVLIKYGLAKGRTLDEDLITQIKYDDAIAKALTIALNYLGHALRTTKQIKQKMRDKAVDEDIQAQVIAQLTQLGYVDDQNYANHYVATKKLITPKGPHVIRLALQQAGVAENMIEQALATYTFDEQCSIATKIAEKLAQGYQRESTRLRQQKMVQGLVNKGFSFETAQLVVDSMNIDNNAEDEQNNAKRQAEKLWHRYRHDESQQRFYKVKRQLYAKGFTSELIDAALLSLEQEEV</sequence>
<reference key="1">
    <citation type="journal article" date="2008" name="J. Bacteriol.">
        <title>Complete genome sequence of Leuconostoc citreum KM20.</title>
        <authorList>
            <person name="Kim J.F."/>
            <person name="Jeong H."/>
            <person name="Lee J.-S."/>
            <person name="Choi S.-H."/>
            <person name="Ha M."/>
            <person name="Hur C.-G."/>
            <person name="Kim J.-S."/>
            <person name="Lee S."/>
            <person name="Park H.-S."/>
            <person name="Park Y.-H."/>
            <person name="Oh T.K."/>
        </authorList>
    </citation>
    <scope>NUCLEOTIDE SEQUENCE [LARGE SCALE GENOMIC DNA]</scope>
    <source>
        <strain>KM20</strain>
    </source>
</reference>
<evidence type="ECO:0000255" key="1">
    <source>
        <dbReference type="HAMAP-Rule" id="MF_01114"/>
    </source>
</evidence>
<proteinExistence type="inferred from homology"/>
<accession>B1MZM6</accession>
<gene>
    <name evidence="1" type="primary">recX</name>
    <name type="ordered locus">LCK_01151</name>
</gene>
<dbReference type="EMBL" id="DQ489736">
    <property type="protein sequence ID" value="ACA82978.1"/>
    <property type="molecule type" value="Genomic_DNA"/>
</dbReference>
<dbReference type="RefSeq" id="WP_004908918.1">
    <property type="nucleotide sequence ID" value="NC_010471.1"/>
</dbReference>
<dbReference type="SMR" id="B1MZM6"/>
<dbReference type="STRING" id="349519.LCK_01151"/>
<dbReference type="KEGG" id="lci:LCK_01151"/>
<dbReference type="eggNOG" id="COG2137">
    <property type="taxonomic scope" value="Bacteria"/>
</dbReference>
<dbReference type="HOGENOM" id="CLU_066607_4_0_9"/>
<dbReference type="OrthoDB" id="5421057at2"/>
<dbReference type="Proteomes" id="UP000002166">
    <property type="component" value="Chromosome"/>
</dbReference>
<dbReference type="GO" id="GO:0005737">
    <property type="term" value="C:cytoplasm"/>
    <property type="evidence" value="ECO:0007669"/>
    <property type="project" value="UniProtKB-SubCell"/>
</dbReference>
<dbReference type="GO" id="GO:0006282">
    <property type="term" value="P:regulation of DNA repair"/>
    <property type="evidence" value="ECO:0007669"/>
    <property type="project" value="UniProtKB-UniRule"/>
</dbReference>
<dbReference type="Gene3D" id="1.10.10.10">
    <property type="entry name" value="Winged helix-like DNA-binding domain superfamily/Winged helix DNA-binding domain"/>
    <property type="match status" value="4"/>
</dbReference>
<dbReference type="HAMAP" id="MF_01114">
    <property type="entry name" value="RecX"/>
    <property type="match status" value="1"/>
</dbReference>
<dbReference type="InterPro" id="IPR053926">
    <property type="entry name" value="RecX_HTH_1st"/>
</dbReference>
<dbReference type="InterPro" id="IPR053924">
    <property type="entry name" value="RecX_HTH_2nd"/>
</dbReference>
<dbReference type="InterPro" id="IPR053925">
    <property type="entry name" value="RecX_HTH_3rd"/>
</dbReference>
<dbReference type="InterPro" id="IPR003783">
    <property type="entry name" value="Regulatory_RecX"/>
</dbReference>
<dbReference type="InterPro" id="IPR036388">
    <property type="entry name" value="WH-like_DNA-bd_sf"/>
</dbReference>
<dbReference type="NCBIfam" id="NF010733">
    <property type="entry name" value="PRK14135.1"/>
    <property type="match status" value="1"/>
</dbReference>
<dbReference type="PANTHER" id="PTHR33602">
    <property type="entry name" value="REGULATORY PROTEIN RECX FAMILY PROTEIN"/>
    <property type="match status" value="1"/>
</dbReference>
<dbReference type="PANTHER" id="PTHR33602:SF1">
    <property type="entry name" value="REGULATORY PROTEIN RECX FAMILY PROTEIN"/>
    <property type="match status" value="1"/>
</dbReference>
<dbReference type="Pfam" id="PF21982">
    <property type="entry name" value="RecX_HTH1"/>
    <property type="match status" value="1"/>
</dbReference>
<dbReference type="Pfam" id="PF02631">
    <property type="entry name" value="RecX_HTH2"/>
    <property type="match status" value="1"/>
</dbReference>
<dbReference type="Pfam" id="PF21981">
    <property type="entry name" value="RecX_HTH3"/>
    <property type="match status" value="2"/>
</dbReference>